<name>FKBP8_MOUSE</name>
<reference key="1">
    <citation type="journal article" date="2003" name="Nat. Cell Biol.">
        <title>Inherent calcineurin inhibitor FKBP38 targets Bcl-2 to mitochondria and inhibits apoptosis.</title>
        <authorList>
            <person name="Shirane M."/>
            <person name="Nakayama K.I."/>
        </authorList>
    </citation>
    <scope>NUCLEOTIDE SEQUENCE [MRNA] (ISOFORM 1)</scope>
    <scope>INTERACTION WITH BCL2 AND BCL2L1/BCLXL</scope>
</reference>
<reference key="2">
    <citation type="journal article" date="2004" name="Development">
        <title>FKBP8 is a negative regulator of mouse sonic hedgehog signaling in neural tissues.</title>
        <authorList>
            <person name="Bulgakov O.V."/>
            <person name="Eggenschwiler J.T."/>
            <person name="Hong D.-H."/>
            <person name="Anderson K.V."/>
            <person name="Li T."/>
        </authorList>
    </citation>
    <scope>NUCLEOTIDE SEQUENCE [MRNA] (ISOFORM 1)</scope>
    <scope>SUBCELLULAR LOCATION</scope>
    <scope>TISSUE SPECIFICITY</scope>
</reference>
<reference key="3">
    <citation type="journal article" date="2005" name="Science">
        <title>The transcriptional landscape of the mammalian genome.</title>
        <authorList>
            <person name="Carninci P."/>
            <person name="Kasukawa T."/>
            <person name="Katayama S."/>
            <person name="Gough J."/>
            <person name="Frith M.C."/>
            <person name="Maeda N."/>
            <person name="Oyama R."/>
            <person name="Ravasi T."/>
            <person name="Lenhard B."/>
            <person name="Wells C."/>
            <person name="Kodzius R."/>
            <person name="Shimokawa K."/>
            <person name="Bajic V.B."/>
            <person name="Brenner S.E."/>
            <person name="Batalov S."/>
            <person name="Forrest A.R."/>
            <person name="Zavolan M."/>
            <person name="Davis M.J."/>
            <person name="Wilming L.G."/>
            <person name="Aidinis V."/>
            <person name="Allen J.E."/>
            <person name="Ambesi-Impiombato A."/>
            <person name="Apweiler R."/>
            <person name="Aturaliya R.N."/>
            <person name="Bailey T.L."/>
            <person name="Bansal M."/>
            <person name="Baxter L."/>
            <person name="Beisel K.W."/>
            <person name="Bersano T."/>
            <person name="Bono H."/>
            <person name="Chalk A.M."/>
            <person name="Chiu K.P."/>
            <person name="Choudhary V."/>
            <person name="Christoffels A."/>
            <person name="Clutterbuck D.R."/>
            <person name="Crowe M.L."/>
            <person name="Dalla E."/>
            <person name="Dalrymple B.P."/>
            <person name="de Bono B."/>
            <person name="Della Gatta G."/>
            <person name="di Bernardo D."/>
            <person name="Down T."/>
            <person name="Engstrom P."/>
            <person name="Fagiolini M."/>
            <person name="Faulkner G."/>
            <person name="Fletcher C.F."/>
            <person name="Fukushima T."/>
            <person name="Furuno M."/>
            <person name="Futaki S."/>
            <person name="Gariboldi M."/>
            <person name="Georgii-Hemming P."/>
            <person name="Gingeras T.R."/>
            <person name="Gojobori T."/>
            <person name="Green R.E."/>
            <person name="Gustincich S."/>
            <person name="Harbers M."/>
            <person name="Hayashi Y."/>
            <person name="Hensch T.K."/>
            <person name="Hirokawa N."/>
            <person name="Hill D."/>
            <person name="Huminiecki L."/>
            <person name="Iacono M."/>
            <person name="Ikeo K."/>
            <person name="Iwama A."/>
            <person name="Ishikawa T."/>
            <person name="Jakt M."/>
            <person name="Kanapin A."/>
            <person name="Katoh M."/>
            <person name="Kawasawa Y."/>
            <person name="Kelso J."/>
            <person name="Kitamura H."/>
            <person name="Kitano H."/>
            <person name="Kollias G."/>
            <person name="Krishnan S.P."/>
            <person name="Kruger A."/>
            <person name="Kummerfeld S.K."/>
            <person name="Kurochkin I.V."/>
            <person name="Lareau L.F."/>
            <person name="Lazarevic D."/>
            <person name="Lipovich L."/>
            <person name="Liu J."/>
            <person name="Liuni S."/>
            <person name="McWilliam S."/>
            <person name="Madan Babu M."/>
            <person name="Madera M."/>
            <person name="Marchionni L."/>
            <person name="Matsuda H."/>
            <person name="Matsuzawa S."/>
            <person name="Miki H."/>
            <person name="Mignone F."/>
            <person name="Miyake S."/>
            <person name="Morris K."/>
            <person name="Mottagui-Tabar S."/>
            <person name="Mulder N."/>
            <person name="Nakano N."/>
            <person name="Nakauchi H."/>
            <person name="Ng P."/>
            <person name="Nilsson R."/>
            <person name="Nishiguchi S."/>
            <person name="Nishikawa S."/>
            <person name="Nori F."/>
            <person name="Ohara O."/>
            <person name="Okazaki Y."/>
            <person name="Orlando V."/>
            <person name="Pang K.C."/>
            <person name="Pavan W.J."/>
            <person name="Pavesi G."/>
            <person name="Pesole G."/>
            <person name="Petrovsky N."/>
            <person name="Piazza S."/>
            <person name="Reed J."/>
            <person name="Reid J.F."/>
            <person name="Ring B.Z."/>
            <person name="Ringwald M."/>
            <person name="Rost B."/>
            <person name="Ruan Y."/>
            <person name="Salzberg S.L."/>
            <person name="Sandelin A."/>
            <person name="Schneider C."/>
            <person name="Schoenbach C."/>
            <person name="Sekiguchi K."/>
            <person name="Semple C.A."/>
            <person name="Seno S."/>
            <person name="Sessa L."/>
            <person name="Sheng Y."/>
            <person name="Shibata Y."/>
            <person name="Shimada H."/>
            <person name="Shimada K."/>
            <person name="Silva D."/>
            <person name="Sinclair B."/>
            <person name="Sperling S."/>
            <person name="Stupka E."/>
            <person name="Sugiura K."/>
            <person name="Sultana R."/>
            <person name="Takenaka Y."/>
            <person name="Taki K."/>
            <person name="Tammoja K."/>
            <person name="Tan S.L."/>
            <person name="Tang S."/>
            <person name="Taylor M.S."/>
            <person name="Tegner J."/>
            <person name="Teichmann S.A."/>
            <person name="Ueda H.R."/>
            <person name="van Nimwegen E."/>
            <person name="Verardo R."/>
            <person name="Wei C.L."/>
            <person name="Yagi K."/>
            <person name="Yamanishi H."/>
            <person name="Zabarovsky E."/>
            <person name="Zhu S."/>
            <person name="Zimmer A."/>
            <person name="Hide W."/>
            <person name="Bult C."/>
            <person name="Grimmond S.M."/>
            <person name="Teasdale R.D."/>
            <person name="Liu E.T."/>
            <person name="Brusic V."/>
            <person name="Quackenbush J."/>
            <person name="Wahlestedt C."/>
            <person name="Mattick J.S."/>
            <person name="Hume D.A."/>
            <person name="Kai C."/>
            <person name="Sasaki D."/>
            <person name="Tomaru Y."/>
            <person name="Fukuda S."/>
            <person name="Kanamori-Katayama M."/>
            <person name="Suzuki M."/>
            <person name="Aoki J."/>
            <person name="Arakawa T."/>
            <person name="Iida J."/>
            <person name="Imamura K."/>
            <person name="Itoh M."/>
            <person name="Kato T."/>
            <person name="Kawaji H."/>
            <person name="Kawagashira N."/>
            <person name="Kawashima T."/>
            <person name="Kojima M."/>
            <person name="Kondo S."/>
            <person name="Konno H."/>
            <person name="Nakano K."/>
            <person name="Ninomiya N."/>
            <person name="Nishio T."/>
            <person name="Okada M."/>
            <person name="Plessy C."/>
            <person name="Shibata K."/>
            <person name="Shiraki T."/>
            <person name="Suzuki S."/>
            <person name="Tagami M."/>
            <person name="Waki K."/>
            <person name="Watahiki A."/>
            <person name="Okamura-Oho Y."/>
            <person name="Suzuki H."/>
            <person name="Kawai J."/>
            <person name="Hayashizaki Y."/>
        </authorList>
    </citation>
    <scope>NUCLEOTIDE SEQUENCE [LARGE SCALE MRNA] (ISOFORM 2)</scope>
    <source>
        <strain>BALB/cJ</strain>
        <strain>C57BL/6J</strain>
        <strain>NOD</strain>
        <tissue>Bone marrow macrophage</tissue>
        <tissue>Placenta</tissue>
        <tissue>Spleen</tissue>
        <tissue>Thymus</tissue>
    </source>
</reference>
<reference key="4">
    <citation type="journal article" date="2004" name="Genome Res.">
        <title>The status, quality, and expansion of the NIH full-length cDNA project: the Mammalian Gene Collection (MGC).</title>
        <authorList>
            <consortium name="The MGC Project Team"/>
        </authorList>
    </citation>
    <scope>NUCLEOTIDE SEQUENCE [LARGE SCALE MRNA] (ISOFORMS 1 AND 2)</scope>
    <source>
        <strain>FVB/N</strain>
        <tissue>Mammary tumor</tissue>
    </source>
</reference>
<reference key="5">
    <citation type="journal article" date="1999" name="Electrophoresis">
        <title>muFKBP38: a novel murine immunophilin homolog differentially expressed in Schwannoma cells and central nervous system neurons in vivo.</title>
        <authorList>
            <person name="Pedersen K.M."/>
            <person name="Finsen B."/>
            <person name="Celis J.E."/>
            <person name="Jensen N.A."/>
        </authorList>
    </citation>
    <scope>NUCLEOTIDE SEQUENCE [MRNA] OF 39-402 (ISOFORM 1)</scope>
    <scope>SUBUNIT</scope>
    <scope>TISSUE SPECIFICITY</scope>
    <source>
        <strain>C57BL/6 X DBA/2</strain>
    </source>
</reference>
<reference key="6">
    <citation type="journal article" date="2004" name="Genomics">
        <title>Fkbp8: novel isoforms, genomic organization, and characterization of a forebrain promoter in transgenic mice.</title>
        <authorList>
            <person name="Nielsen J.V."/>
            <person name="Mitchelmore C."/>
            <person name="Pedersen K.M."/>
            <person name="Kjaerulff K.M."/>
            <person name="Finsen B."/>
            <person name="Jensen N.A."/>
        </authorList>
    </citation>
    <scope>NUCLEOTIDE SEQUENCE [GENOMIC DNA] OF 48-402</scope>
    <scope>SEQUENCE REVISION TO 100 AND 400</scope>
    <scope>ALTERNATIVE SPLICING</scope>
    <scope>TISSUE SPECIFICITY</scope>
    <source>
        <strain>129/SvJ</strain>
    </source>
</reference>
<reference key="7">
    <citation type="journal article" date="2008" name="Genes Cells">
        <title>Regulation of apoptosis and neurite extension by FKBP38 is required for neural tube formation in the mouse.</title>
        <authorList>
            <person name="Shirane M."/>
            <person name="Ogawa M."/>
            <person name="Motoyama J."/>
            <person name="Nakayama K.I."/>
        </authorList>
    </citation>
    <scope>DISRUPTION PHENOTYPE</scope>
</reference>
<reference key="8">
    <citation type="journal article" date="2010" name="Cell">
        <title>A tissue-specific atlas of mouse protein phosphorylation and expression.</title>
        <authorList>
            <person name="Huttlin E.L."/>
            <person name="Jedrychowski M.P."/>
            <person name="Elias J.E."/>
            <person name="Goswami T."/>
            <person name="Rad R."/>
            <person name="Beausoleil S.A."/>
            <person name="Villen J."/>
            <person name="Haas W."/>
            <person name="Sowa M.E."/>
            <person name="Gygi S.P."/>
        </authorList>
    </citation>
    <scope>IDENTIFICATION BY MASS SPECTROMETRY [LARGE SCALE ANALYSIS]</scope>
    <source>
        <tissue>Brain</tissue>
        <tissue>Brown adipose tissue</tissue>
        <tissue>Heart</tissue>
        <tissue>Kidney</tissue>
        <tissue>Liver</tissue>
        <tissue>Lung</tissue>
        <tissue>Pancreas</tissue>
        <tissue>Spleen</tissue>
        <tissue>Testis</tissue>
    </source>
</reference>
<keyword id="KW-0025">Alternative splicing</keyword>
<keyword id="KW-0053">Apoptosis</keyword>
<keyword id="KW-0106">Calcium</keyword>
<keyword id="KW-0413">Isomerase</keyword>
<keyword id="KW-1017">Isopeptide bond</keyword>
<keyword id="KW-0472">Membrane</keyword>
<keyword id="KW-0496">Mitochondrion</keyword>
<keyword id="KW-0597">Phosphoprotein</keyword>
<keyword id="KW-1185">Reference proteome</keyword>
<keyword id="KW-0677">Repeat</keyword>
<keyword id="KW-0697">Rotamase</keyword>
<keyword id="KW-0802">TPR repeat</keyword>
<keyword id="KW-0812">Transmembrane</keyword>
<keyword id="KW-1133">Transmembrane helix</keyword>
<keyword id="KW-0832">Ubl conjugation</keyword>
<evidence type="ECO:0000250" key="1"/>
<evidence type="ECO:0000250" key="2">
    <source>
        <dbReference type="UniProtKB" id="Q14318"/>
    </source>
</evidence>
<evidence type="ECO:0000255" key="3"/>
<evidence type="ECO:0000255" key="4">
    <source>
        <dbReference type="PROSITE-ProRule" id="PRU00277"/>
    </source>
</evidence>
<evidence type="ECO:0000256" key="5">
    <source>
        <dbReference type="SAM" id="MobiDB-lite"/>
    </source>
</evidence>
<evidence type="ECO:0000269" key="6">
    <source>
    </source>
</evidence>
<evidence type="ECO:0000269" key="7">
    <source>
    </source>
</evidence>
<evidence type="ECO:0000269" key="8">
    <source>
    </source>
</evidence>
<evidence type="ECO:0000269" key="9">
    <source>
    </source>
</evidence>
<evidence type="ECO:0000303" key="10">
    <source>
    </source>
</evidence>
<evidence type="ECO:0000303" key="11">
    <source>
    </source>
</evidence>
<evidence type="ECO:0000305" key="12"/>
<comment type="function">
    <text evidence="1">Constitutively inactive PPiase, which becomes active when bound to calmodulin and calcium. Seems to act as a chaperone for BCL2, targets it to the mitochondria and modulates its phosphorylation state. The BCL2/FKBP8/calmodulin/calcium complex probably interferes with the binding of BCL2 to its targets. The active form of FKBP8 may therefore play a role in the regulation of apoptosis (By similarity). Required for normal embryonic development.</text>
</comment>
<comment type="catalytic activity">
    <reaction>
        <text>[protein]-peptidylproline (omega=180) = [protein]-peptidylproline (omega=0)</text>
        <dbReference type="Rhea" id="RHEA:16237"/>
        <dbReference type="Rhea" id="RHEA-COMP:10747"/>
        <dbReference type="Rhea" id="RHEA-COMP:10748"/>
        <dbReference type="ChEBI" id="CHEBI:83833"/>
        <dbReference type="ChEBI" id="CHEBI:83834"/>
        <dbReference type="EC" id="5.2.1.8"/>
    </reaction>
</comment>
<comment type="cofactor">
    <cofactor evidence="1">
        <name>Ca(2+)</name>
        <dbReference type="ChEBI" id="CHEBI:29108"/>
    </cofactor>
</comment>
<comment type="subunit">
    <text evidence="1 12">Homomultimers or heteromultimers (Potential). Forms heterodimer with calmodulin. When activated by calmodulin and calcium, interacts with the BH4 domain of BCL2 and weakly with BCLX isoform Bcl-X(L). Does not bind and inhibit calcineurin (By similarity). Interacts with ZFYVE27; may negatively regulate ZFYVE27 phosphorylation (By similarity).</text>
</comment>
<comment type="subcellular location">
    <subcellularLocation>
        <location evidence="8">Mitochondrion membrane</location>
        <topology evidence="8">Single-pass membrane protein</topology>
        <orientation evidence="8">Cytoplasmic side</orientation>
    </subcellularLocation>
</comment>
<comment type="alternative products">
    <event type="alternative splicing"/>
    <isoform>
        <id>O35465-1</id>
        <name>1</name>
        <sequence type="displayed"/>
    </isoform>
    <isoform>
        <id>O35465-2</id>
        <name>2</name>
        <sequence type="described" ref="VSP_034487"/>
    </isoform>
</comment>
<comment type="tissue specificity">
    <text evidence="6 7 8">Detected throughout the embryonic body, in caudal neural tube, limbs and head. Detected in adult retina, brain, heart, kidney, liver, pancreas, lung, testis and urinary bladder (at protein level). Detected in adult brain, kidney, liver, testis and trigeminal nerve, and in embryo. Detected at lower levels in lung, spleen, heart and ovary. Widely expressed in forebrain. Detected in the Purkinje cell layer in the cerebellum and in hippocampus neurons.</text>
</comment>
<comment type="PTM">
    <text evidence="2">Ubiquitinated by PRKN during mitophagy, leading to its degradation and enhancement of mitophagy. Deubiquitinated by USP30.</text>
</comment>
<comment type="disruption phenotype">
    <text evidence="9">Mice die shortly after birth. They display neural tube and skeletal defects. The neuroepithelium is disorganized and the formation of dorsal root ganglia is defective, likely as a result of an increased frequency of apoptosis and aberrant migration of neuronal cells. The extension of nerve fibers in the spinal cord is also abnormal.</text>
</comment>
<comment type="miscellaneous">
    <text evidence="1">Binds the immunosuppressant FK506 only in its calmodulin/calcium activated form.</text>
</comment>
<comment type="sequence caution" evidence="12">
    <conflict type="erroneous initiation">
        <sequence resource="EMBL-CDS" id="AAB86422"/>
    </conflict>
</comment>
<comment type="sequence caution" evidence="12">
    <conflict type="erroneous initiation">
        <sequence resource="EMBL-CDS" id="AAH03739"/>
    </conflict>
</comment>
<comment type="sequence caution" evidence="12">
    <conflict type="erroneous initiation">
        <sequence resource="EMBL-CDS" id="AAH27808"/>
    </conflict>
</comment>
<comment type="sequence caution" evidence="12">
    <conflict type="erroneous gene model prediction">
        <sequence resource="EMBL-CDS" id="AAO27795"/>
    </conflict>
</comment>
<comment type="sequence caution" evidence="12">
    <conflict type="erroneous initiation">
        <sequence resource="EMBL-CDS" id="BAC40541"/>
    </conflict>
</comment>
<comment type="sequence caution" evidence="12">
    <conflict type="erroneous initiation">
        <sequence resource="EMBL-CDS" id="BAE26916"/>
    </conflict>
</comment>
<comment type="sequence caution" evidence="12">
    <conflict type="erroneous initiation">
        <sequence resource="EMBL-CDS" id="BAE31027"/>
    </conflict>
</comment>
<comment type="sequence caution" evidence="12">
    <conflict type="erroneous initiation">
        <sequence resource="EMBL-CDS" id="BAE38118"/>
    </conflict>
</comment>
<comment type="sequence caution" evidence="12">
    <conflict type="erroneous initiation">
        <sequence resource="EMBL-CDS" id="BAE39713"/>
    </conflict>
</comment>
<dbReference type="EC" id="5.2.1.8"/>
<dbReference type="EMBL" id="AY225340">
    <property type="protein sequence ID" value="AAO39021.1"/>
    <property type="molecule type" value="mRNA"/>
</dbReference>
<dbReference type="EMBL" id="AY278608">
    <property type="protein sequence ID" value="AAQ84562.1"/>
    <property type="molecule type" value="mRNA"/>
</dbReference>
<dbReference type="EMBL" id="AK088739">
    <property type="protein sequence ID" value="BAC40541.1"/>
    <property type="status" value="ALT_INIT"/>
    <property type="molecule type" value="mRNA"/>
</dbReference>
<dbReference type="EMBL" id="AK146122">
    <property type="protein sequence ID" value="BAE26916.1"/>
    <property type="status" value="ALT_INIT"/>
    <property type="molecule type" value="mRNA"/>
</dbReference>
<dbReference type="EMBL" id="AK152198">
    <property type="protein sequence ID" value="BAE31027.1"/>
    <property type="status" value="ALT_INIT"/>
    <property type="molecule type" value="mRNA"/>
</dbReference>
<dbReference type="EMBL" id="AK165281">
    <property type="protein sequence ID" value="BAE38118.1"/>
    <property type="status" value="ALT_INIT"/>
    <property type="molecule type" value="mRNA"/>
</dbReference>
<dbReference type="EMBL" id="AK167663">
    <property type="protein sequence ID" value="BAE39713.1"/>
    <property type="status" value="ALT_INIT"/>
    <property type="molecule type" value="mRNA"/>
</dbReference>
<dbReference type="EMBL" id="BC003739">
    <property type="protein sequence ID" value="AAH03739.1"/>
    <property type="status" value="ALT_INIT"/>
    <property type="molecule type" value="mRNA"/>
</dbReference>
<dbReference type="EMBL" id="BC027808">
    <property type="protein sequence ID" value="AAH27808.1"/>
    <property type="status" value="ALT_INIT"/>
    <property type="molecule type" value="mRNA"/>
</dbReference>
<dbReference type="EMBL" id="AF030635">
    <property type="protein sequence ID" value="AAB86422.1"/>
    <property type="status" value="ALT_INIT"/>
    <property type="molecule type" value="mRNA"/>
</dbReference>
<dbReference type="EMBL" id="AY187231">
    <property type="protein sequence ID" value="AAO27795.1"/>
    <property type="status" value="ALT_SEQ"/>
    <property type="molecule type" value="Genomic_DNA"/>
</dbReference>
<dbReference type="CCDS" id="CCDS52575.1">
    <molecule id="O35465-2"/>
</dbReference>
<dbReference type="CCDS" id="CCDS52576.1">
    <molecule id="O35465-1"/>
</dbReference>
<dbReference type="RefSeq" id="NP_001104536.1">
    <molecule id="O35465-2"/>
    <property type="nucleotide sequence ID" value="NM_001111066.1"/>
</dbReference>
<dbReference type="RefSeq" id="NP_001186560.1">
    <molecule id="O35465-2"/>
    <property type="nucleotide sequence ID" value="NM_001199631.1"/>
</dbReference>
<dbReference type="RefSeq" id="NP_034353.2">
    <molecule id="O35465-1"/>
    <property type="nucleotide sequence ID" value="NM_010223.2"/>
</dbReference>
<dbReference type="RefSeq" id="XP_006509619.1">
    <molecule id="O35465-2"/>
    <property type="nucleotide sequence ID" value="XM_006509556.4"/>
</dbReference>
<dbReference type="RefSeq" id="XP_017168056.1">
    <molecule id="O35465-1"/>
    <property type="nucleotide sequence ID" value="XM_017312567.3"/>
</dbReference>
<dbReference type="RefSeq" id="XP_017168057.1">
    <molecule id="O35465-1"/>
    <property type="nucleotide sequence ID" value="XM_017312568.2"/>
</dbReference>
<dbReference type="SMR" id="O35465"/>
<dbReference type="BioGRID" id="199689">
    <property type="interactions" value="9"/>
</dbReference>
<dbReference type="FunCoup" id="O35465">
    <property type="interactions" value="1937"/>
</dbReference>
<dbReference type="IntAct" id="O35465">
    <property type="interactions" value="2"/>
</dbReference>
<dbReference type="MINT" id="O35465"/>
<dbReference type="STRING" id="10090.ENSMUSP00000114069"/>
<dbReference type="GlyGen" id="O35465">
    <property type="glycosylation" value="1 site, 1 O-linked glycan (1 site)"/>
</dbReference>
<dbReference type="iPTMnet" id="O35465"/>
<dbReference type="PhosphoSitePlus" id="O35465"/>
<dbReference type="SwissPalm" id="O35465"/>
<dbReference type="jPOST" id="O35465"/>
<dbReference type="PaxDb" id="10090-ENSMUSP00000114069"/>
<dbReference type="PeptideAtlas" id="O35465"/>
<dbReference type="ProteomicsDB" id="272922">
    <molecule id="O35465-1"/>
</dbReference>
<dbReference type="ProteomicsDB" id="272923">
    <molecule id="O35465-2"/>
</dbReference>
<dbReference type="Pumba" id="O35465"/>
<dbReference type="Antibodypedia" id="28073">
    <property type="antibodies" value="401 antibodies from 34 providers"/>
</dbReference>
<dbReference type="DNASU" id="14232"/>
<dbReference type="Ensembl" id="ENSMUST00000075491.14">
    <molecule id="O35465-2"/>
    <property type="protein sequence ID" value="ENSMUSP00000074935.8"/>
    <property type="gene ID" value="ENSMUSG00000019428.17"/>
</dbReference>
<dbReference type="Ensembl" id="ENSMUST00000119353.9">
    <molecule id="O35465-1"/>
    <property type="protein sequence ID" value="ENSMUSP00000112527.3"/>
    <property type="gene ID" value="ENSMUSG00000019428.17"/>
</dbReference>
<dbReference type="Ensembl" id="ENSMUST00000119698.8">
    <molecule id="O35465-2"/>
    <property type="protein sequence ID" value="ENSMUSP00000114069.2"/>
    <property type="gene ID" value="ENSMUSG00000019428.17"/>
</dbReference>
<dbReference type="GeneID" id="14232"/>
<dbReference type="KEGG" id="mmu:14232"/>
<dbReference type="UCSC" id="uc009mao.2">
    <molecule id="O35465-2"/>
    <property type="organism name" value="mouse"/>
</dbReference>
<dbReference type="UCSC" id="uc009map.2">
    <molecule id="O35465-1"/>
    <property type="organism name" value="mouse"/>
</dbReference>
<dbReference type="AGR" id="MGI:1341070"/>
<dbReference type="CTD" id="23770"/>
<dbReference type="MGI" id="MGI:1341070">
    <property type="gene designation" value="Fkbp8"/>
</dbReference>
<dbReference type="VEuPathDB" id="HostDB:ENSMUSG00000019428"/>
<dbReference type="eggNOG" id="KOG0543">
    <property type="taxonomic scope" value="Eukaryota"/>
</dbReference>
<dbReference type="GeneTree" id="ENSGT00940000156705"/>
<dbReference type="HOGENOM" id="CLU_013615_1_3_1"/>
<dbReference type="InParanoid" id="O35465"/>
<dbReference type="OMA" id="IDAWEMV"/>
<dbReference type="OrthoDB" id="75132at9989"/>
<dbReference type="TreeFam" id="TF105295"/>
<dbReference type="Reactome" id="R-MMU-5689880">
    <property type="pathway name" value="Ub-specific processing proteases"/>
</dbReference>
<dbReference type="BioGRID-ORCS" id="14232">
    <property type="hits" value="1 hit in 77 CRISPR screens"/>
</dbReference>
<dbReference type="CD-CODE" id="CE726F99">
    <property type="entry name" value="Postsynaptic density"/>
</dbReference>
<dbReference type="ChiTaRS" id="Fkbp8">
    <property type="organism name" value="mouse"/>
</dbReference>
<dbReference type="PRO" id="PR:O35465"/>
<dbReference type="Proteomes" id="UP000000589">
    <property type="component" value="Chromosome 8"/>
</dbReference>
<dbReference type="RNAct" id="O35465">
    <property type="molecule type" value="protein"/>
</dbReference>
<dbReference type="Bgee" id="ENSMUSG00000019428">
    <property type="expression patterns" value="Expressed in embryonic brain and 261 other cell types or tissues"/>
</dbReference>
<dbReference type="ExpressionAtlas" id="O35465">
    <property type="expression patterns" value="baseline and differential"/>
</dbReference>
<dbReference type="GO" id="GO:0005829">
    <property type="term" value="C:cytosol"/>
    <property type="evidence" value="ECO:0007669"/>
    <property type="project" value="Ensembl"/>
</dbReference>
<dbReference type="GO" id="GO:0005789">
    <property type="term" value="C:endoplasmic reticulum membrane"/>
    <property type="evidence" value="ECO:0000314"/>
    <property type="project" value="MGI"/>
</dbReference>
<dbReference type="GO" id="GO:0005740">
    <property type="term" value="C:mitochondrial envelope"/>
    <property type="evidence" value="ECO:0000314"/>
    <property type="project" value="MGI"/>
</dbReference>
<dbReference type="GO" id="GO:0031966">
    <property type="term" value="C:mitochondrial membrane"/>
    <property type="evidence" value="ECO:0007669"/>
    <property type="project" value="UniProtKB-SubCell"/>
</dbReference>
<dbReference type="GO" id="GO:0005739">
    <property type="term" value="C:mitochondrion"/>
    <property type="evidence" value="ECO:0007005"/>
    <property type="project" value="MGI"/>
</dbReference>
<dbReference type="GO" id="GO:0032991">
    <property type="term" value="C:protein-containing complex"/>
    <property type="evidence" value="ECO:0007669"/>
    <property type="project" value="Ensembl"/>
</dbReference>
<dbReference type="GO" id="GO:0005516">
    <property type="term" value="F:calmodulin binding"/>
    <property type="evidence" value="ECO:0007669"/>
    <property type="project" value="Ensembl"/>
</dbReference>
<dbReference type="GO" id="GO:0097718">
    <property type="term" value="F:disordered domain specific binding"/>
    <property type="evidence" value="ECO:0007669"/>
    <property type="project" value="Ensembl"/>
</dbReference>
<dbReference type="GO" id="GO:0042802">
    <property type="term" value="F:identical protein binding"/>
    <property type="evidence" value="ECO:0007669"/>
    <property type="project" value="Ensembl"/>
</dbReference>
<dbReference type="GO" id="GO:0003755">
    <property type="term" value="F:peptidyl-prolyl cis-trans isomerase activity"/>
    <property type="evidence" value="ECO:0007669"/>
    <property type="project" value="UniProtKB-KW"/>
</dbReference>
<dbReference type="GO" id="GO:0044183">
    <property type="term" value="F:protein folding chaperone"/>
    <property type="evidence" value="ECO:0000315"/>
    <property type="project" value="MGI"/>
</dbReference>
<dbReference type="GO" id="GO:0006915">
    <property type="term" value="P:apoptotic process"/>
    <property type="evidence" value="ECO:0000315"/>
    <property type="project" value="MGI"/>
</dbReference>
<dbReference type="GO" id="GO:0030509">
    <property type="term" value="P:BMP signaling pathway"/>
    <property type="evidence" value="ECO:0000315"/>
    <property type="project" value="MGI"/>
</dbReference>
<dbReference type="GO" id="GO:0043010">
    <property type="term" value="P:camera-type eye development"/>
    <property type="evidence" value="ECO:0000315"/>
    <property type="project" value="MGI"/>
</dbReference>
<dbReference type="GO" id="GO:0001708">
    <property type="term" value="P:cell fate specification"/>
    <property type="evidence" value="ECO:0000315"/>
    <property type="project" value="MGI"/>
</dbReference>
<dbReference type="GO" id="GO:0021904">
    <property type="term" value="P:dorsal/ventral neural tube patterning"/>
    <property type="evidence" value="ECO:0000314"/>
    <property type="project" value="MGI"/>
</dbReference>
<dbReference type="GO" id="GO:0009953">
    <property type="term" value="P:dorsal/ventral pattern formation"/>
    <property type="evidence" value="ECO:0000315"/>
    <property type="project" value="MGI"/>
</dbReference>
<dbReference type="GO" id="GO:0035264">
    <property type="term" value="P:multicellular organism growth"/>
    <property type="evidence" value="ECO:0000316"/>
    <property type="project" value="MGI"/>
</dbReference>
<dbReference type="GO" id="GO:0043066">
    <property type="term" value="P:negative regulation of apoptotic process"/>
    <property type="evidence" value="ECO:0000315"/>
    <property type="project" value="MGI"/>
</dbReference>
<dbReference type="GO" id="GO:0021915">
    <property type="term" value="P:neural tube development"/>
    <property type="evidence" value="ECO:0000315"/>
    <property type="project" value="MGI"/>
</dbReference>
<dbReference type="GO" id="GO:0048665">
    <property type="term" value="P:neuron fate specification"/>
    <property type="evidence" value="ECO:0000315"/>
    <property type="project" value="MGI"/>
</dbReference>
<dbReference type="GO" id="GO:0030513">
    <property type="term" value="P:positive regulation of BMP signaling pathway"/>
    <property type="evidence" value="ECO:0000315"/>
    <property type="project" value="MGI"/>
</dbReference>
<dbReference type="GO" id="GO:0006457">
    <property type="term" value="P:protein folding"/>
    <property type="evidence" value="ECO:0000315"/>
    <property type="project" value="MGI"/>
</dbReference>
<dbReference type="GO" id="GO:0070585">
    <property type="term" value="P:protein localization to mitochondrion"/>
    <property type="evidence" value="ECO:0007669"/>
    <property type="project" value="Ensembl"/>
</dbReference>
<dbReference type="GO" id="GO:0030510">
    <property type="term" value="P:regulation of BMP signaling pathway"/>
    <property type="evidence" value="ECO:0000316"/>
    <property type="project" value="MGI"/>
</dbReference>
<dbReference type="GO" id="GO:0010468">
    <property type="term" value="P:regulation of gene expression"/>
    <property type="evidence" value="ECO:0000316"/>
    <property type="project" value="MGI"/>
</dbReference>
<dbReference type="GO" id="GO:1901524">
    <property type="term" value="P:regulation of mitophagy"/>
    <property type="evidence" value="ECO:0007669"/>
    <property type="project" value="Ensembl"/>
</dbReference>
<dbReference type="GO" id="GO:0007224">
    <property type="term" value="P:smoothened signaling pathway"/>
    <property type="evidence" value="ECO:0000315"/>
    <property type="project" value="MGI"/>
</dbReference>
<dbReference type="FunFam" id="1.25.40.10:FF:000113">
    <property type="entry name" value="Peptidylprolyl isomerase"/>
    <property type="match status" value="1"/>
</dbReference>
<dbReference type="FunFam" id="3.10.50.40:FF:000027">
    <property type="entry name" value="Peptidylprolyl isomerase"/>
    <property type="match status" value="1"/>
</dbReference>
<dbReference type="Gene3D" id="3.10.50.40">
    <property type="match status" value="1"/>
</dbReference>
<dbReference type="Gene3D" id="1.25.40.10">
    <property type="entry name" value="Tetratricopeptide repeat domain"/>
    <property type="match status" value="1"/>
</dbReference>
<dbReference type="InterPro" id="IPR050754">
    <property type="entry name" value="FKBP4/5/8-like"/>
</dbReference>
<dbReference type="InterPro" id="IPR046357">
    <property type="entry name" value="PPIase_dom_sf"/>
</dbReference>
<dbReference type="InterPro" id="IPR001179">
    <property type="entry name" value="PPIase_FKBP_dom"/>
</dbReference>
<dbReference type="InterPro" id="IPR011990">
    <property type="entry name" value="TPR-like_helical_dom_sf"/>
</dbReference>
<dbReference type="InterPro" id="IPR019734">
    <property type="entry name" value="TPR_rpt"/>
</dbReference>
<dbReference type="PANTHER" id="PTHR46512:SF3">
    <property type="entry name" value="PEPTIDYL-PROLYL CIS-TRANS ISOMERASE FKBP8"/>
    <property type="match status" value="1"/>
</dbReference>
<dbReference type="PANTHER" id="PTHR46512">
    <property type="entry name" value="PEPTIDYLPROLYL ISOMERASE"/>
    <property type="match status" value="1"/>
</dbReference>
<dbReference type="Pfam" id="PF00254">
    <property type="entry name" value="FKBP_C"/>
    <property type="match status" value="1"/>
</dbReference>
<dbReference type="Pfam" id="PF13432">
    <property type="entry name" value="TPR_16"/>
    <property type="match status" value="1"/>
</dbReference>
<dbReference type="SMART" id="SM00028">
    <property type="entry name" value="TPR"/>
    <property type="match status" value="3"/>
</dbReference>
<dbReference type="SUPFAM" id="SSF54534">
    <property type="entry name" value="FKBP-like"/>
    <property type="match status" value="1"/>
</dbReference>
<dbReference type="SUPFAM" id="SSF48452">
    <property type="entry name" value="TPR-like"/>
    <property type="match status" value="1"/>
</dbReference>
<dbReference type="PROSITE" id="PS50059">
    <property type="entry name" value="FKBP_PPIASE"/>
    <property type="match status" value="1"/>
</dbReference>
<dbReference type="PROSITE" id="PS50005">
    <property type="entry name" value="TPR"/>
    <property type="match status" value="2"/>
</dbReference>
<dbReference type="PROSITE" id="PS50293">
    <property type="entry name" value="TPR_REGION"/>
    <property type="match status" value="1"/>
</dbReference>
<feature type="chain" id="PRO_0000075332" description="Peptidyl-prolyl cis-trans isomerase FKBP8">
    <location>
        <begin position="1"/>
        <end position="402"/>
    </location>
</feature>
<feature type="transmembrane region" description="Helical" evidence="3">
    <location>
        <begin position="380"/>
        <end position="400"/>
    </location>
</feature>
<feature type="domain" description="PPIase FKBP-type" evidence="4">
    <location>
        <begin position="110"/>
        <end position="194"/>
    </location>
</feature>
<feature type="repeat" description="TPR 1">
    <location>
        <begin position="211"/>
        <end position="244"/>
    </location>
</feature>
<feature type="repeat" description="TPR 2">
    <location>
        <begin position="262"/>
        <end position="295"/>
    </location>
</feature>
<feature type="repeat" description="TPR 3">
    <location>
        <begin position="296"/>
        <end position="329"/>
    </location>
</feature>
<feature type="region of interest" description="Disordered" evidence="5">
    <location>
        <begin position="28"/>
        <end position="54"/>
    </location>
</feature>
<feature type="compositionally biased region" description="Acidic residues" evidence="5">
    <location>
        <begin position="28"/>
        <end position="39"/>
    </location>
</feature>
<feature type="modified residue" description="Phosphoserine" evidence="2">
    <location>
        <position position="286"/>
    </location>
</feature>
<feature type="cross-link" description="Glycyl lysine isopeptide (Lys-Gly) (interchain with G-Cter in ubiquitin)" evidence="2">
    <location>
        <position position="239"/>
    </location>
</feature>
<feature type="cross-link" description="Glycyl lysine isopeptide (Lys-Gly) (interchain with G-Cter in ubiquitin)" evidence="2">
    <location>
        <position position="261"/>
    </location>
</feature>
<feature type="cross-link" description="Glycyl lysine isopeptide (Lys-Gly) (interchain with G-Cter in ubiquitin)" evidence="2">
    <location>
        <position position="263"/>
    </location>
</feature>
<feature type="cross-link" description="Glycyl lysine isopeptide (Lys-Gly) (interchain with G-Cter in ubiquitin)" evidence="2">
    <location>
        <position position="274"/>
    </location>
</feature>
<feature type="cross-link" description="Glycyl lysine isopeptide (Lys-Gly) (interchain with G-Cter in ubiquitin)" evidence="2">
    <location>
        <position position="297"/>
    </location>
</feature>
<feature type="cross-link" description="Glycyl lysine isopeptide (Lys-Gly) (interchain with G-Cter in ubiquitin)" evidence="2">
    <location>
        <position position="304"/>
    </location>
</feature>
<feature type="cross-link" description="Glycyl lysine isopeptide (Lys-Gly) (interchain with G-Cter in ubiquitin)" evidence="2">
    <location>
        <position position="324"/>
    </location>
</feature>
<feature type="cross-link" description="Glycyl lysine isopeptide (Lys-Gly) (interchain with G-Cter in ubiquitin)" evidence="2">
    <location>
        <position position="330"/>
    </location>
</feature>
<feature type="cross-link" description="Glycyl lysine isopeptide (Lys-Gly) (interchain with G-Cter in ubiquitin)" evidence="2">
    <location>
        <position position="338"/>
    </location>
</feature>
<feature type="cross-link" description="Glycyl lysine isopeptide (Lys-Gly) (interchain with G-Cter in ubiquitin)" evidence="2">
    <location>
        <position position="341"/>
    </location>
</feature>
<feature type="cross-link" description="Glycyl lysine isopeptide (Lys-Gly) (interchain with G-Cter in ubiquitin)" evidence="2">
    <location>
        <position position="342"/>
    </location>
</feature>
<feature type="splice variant" id="VSP_034487" description="In isoform 2." evidence="10 11">
    <original>G</original>
    <variation>GS</variation>
    <location>
        <position position="173"/>
    </location>
</feature>
<feature type="sequence conflict" description="In Ref. 1; AAO39021, 2; AAQ84562, 4; AAH03739 and 5; AAB86422." evidence="12" ref="1 2 4 5">
    <original>G</original>
    <variation>C</variation>
    <location>
        <position position="100"/>
    </location>
</feature>
<feature type="sequence conflict" description="In Ref. 3; BAE26916." evidence="12" ref="3">
    <original>A</original>
    <variation>T</variation>
    <location>
        <position position="163"/>
    </location>
</feature>
<feature type="sequence conflict" description="In Ref. 3; BAC40541." evidence="12" ref="3">
    <original>G</original>
    <variation>A</variation>
    <location>
        <position position="170"/>
    </location>
</feature>
<feature type="sequence conflict" description="In Ref. 1; AAO39021, 2; AAQ84562, 4; AAH03739 and 5; AAB86422." evidence="12" ref="1 2 4 5">
    <original>A</original>
    <variation>G</variation>
    <location>
        <position position="400"/>
    </location>
</feature>
<protein>
    <recommendedName>
        <fullName>Peptidyl-prolyl cis-trans isomerase FKBP8</fullName>
        <shortName>PPIase FKBP8</shortName>
        <ecNumber>5.2.1.8</ecNumber>
    </recommendedName>
    <alternativeName>
        <fullName>38 kDa FK506-binding protein</fullName>
        <shortName>38 kDa FKBP</shortName>
        <shortName>FKBP-38</shortName>
        <shortName>mFKBP38</shortName>
    </alternativeName>
    <alternativeName>
        <fullName>FK506-binding protein 8</fullName>
        <shortName>FKBP-8</shortName>
    </alternativeName>
    <alternativeName>
        <fullName>FKBPR38</fullName>
    </alternativeName>
    <alternativeName>
        <fullName>Rotamase</fullName>
    </alternativeName>
</protein>
<gene>
    <name type="primary">Fkbp8</name>
    <name type="synonym">Fkbp38</name>
    <name type="synonym">Sam11</name>
</gene>
<sequence length="402" mass="43529">MASWAEPSEPAALRLPGAPLLEGFEVLDGVDDAEEEDDLSGLPPLEDMGQPTVEEAEQPGALAREFLAATEPEPAPAPAPEEWLDILGNGLLRMKTLVPGPKGSSRPLKGQVVTVHLQMSLENGTRVQEEPELAFTLGDCDVIQALDLSVPLMDVGETAMVTADSKYCYGPQGRSPYIPPHAALCLEVTLKTAEDGPDLEMLSGQERVALANRKRECGNAHYQRADFVLAANSYDLAIKAITSNTKVDMTCEEEEELLQLKVKCLNNLAASQLKLDHYRAALRSCSQVLEHQPDNIKALFRKGKVLAQQGEYSEAIPILRAALKLEPSNKTIHAELSKLVKKRAAQRSTETALYRKMLGNPSRLPAKCPGKGAWSIPWKWLFGATAVALGGVALSVVIAARN</sequence>
<accession>O35465</accession>
<accession>Q3UK86</accession>
<accession>Q6GTX9</accession>
<accession>Q811M7</accession>
<accession>Q811R4</accession>
<accession>Q8C2F0</accession>
<accession>Q99L93</accession>
<organism>
    <name type="scientific">Mus musculus</name>
    <name type="common">Mouse</name>
    <dbReference type="NCBI Taxonomy" id="10090"/>
    <lineage>
        <taxon>Eukaryota</taxon>
        <taxon>Metazoa</taxon>
        <taxon>Chordata</taxon>
        <taxon>Craniata</taxon>
        <taxon>Vertebrata</taxon>
        <taxon>Euteleostomi</taxon>
        <taxon>Mammalia</taxon>
        <taxon>Eutheria</taxon>
        <taxon>Euarchontoglires</taxon>
        <taxon>Glires</taxon>
        <taxon>Rodentia</taxon>
        <taxon>Myomorpha</taxon>
        <taxon>Muroidea</taxon>
        <taxon>Muridae</taxon>
        <taxon>Murinae</taxon>
        <taxon>Mus</taxon>
        <taxon>Mus</taxon>
    </lineage>
</organism>
<proteinExistence type="evidence at protein level"/>